<sequence>MSARCQITGRTVGFGKAVSHSHRRTRRRWPPNIQLKAYYLPSEDRRIKVRVSAQGIKVIDRDGHRGRRRAARAGSAPAHFARQAGSSLRTAAIL</sequence>
<gene>
    <name type="primary">rpmB1</name>
    <name type="synonym">rpmB</name>
    <name type="ordered locus">MT0114</name>
</gene>
<protein>
    <recommendedName>
        <fullName evidence="1">Large ribosomal subunit protein bL28A</fullName>
    </recommendedName>
    <alternativeName>
        <fullName evidence="3">50S ribosomal protein L28 1</fullName>
    </alternativeName>
</protein>
<feature type="chain" id="PRO_0000428218" description="Large ribosomal subunit protein bL28A">
    <location>
        <begin position="1"/>
        <end position="94"/>
    </location>
</feature>
<feature type="region of interest" description="Disordered" evidence="2">
    <location>
        <begin position="63"/>
        <end position="94"/>
    </location>
</feature>
<feature type="compositionally biased region" description="Low complexity" evidence="2">
    <location>
        <begin position="72"/>
        <end position="82"/>
    </location>
</feature>
<feature type="compositionally biased region" description="Polar residues" evidence="2">
    <location>
        <begin position="84"/>
        <end position="94"/>
    </location>
</feature>
<accession>P9WHB0</accession>
<accession>L0T2L7</accession>
<accession>P0A5V6</accession>
<accession>Q10879</accession>
<organism>
    <name type="scientific">Mycobacterium tuberculosis (strain CDC 1551 / Oshkosh)</name>
    <dbReference type="NCBI Taxonomy" id="83331"/>
    <lineage>
        <taxon>Bacteria</taxon>
        <taxon>Bacillati</taxon>
        <taxon>Actinomycetota</taxon>
        <taxon>Actinomycetes</taxon>
        <taxon>Mycobacteriales</taxon>
        <taxon>Mycobacteriaceae</taxon>
        <taxon>Mycobacterium</taxon>
        <taxon>Mycobacterium tuberculosis complex</taxon>
    </lineage>
</organism>
<evidence type="ECO:0000255" key="1">
    <source>
        <dbReference type="HAMAP-Rule" id="MF_00373"/>
    </source>
</evidence>
<evidence type="ECO:0000256" key="2">
    <source>
        <dbReference type="SAM" id="MobiDB-lite"/>
    </source>
</evidence>
<evidence type="ECO:0000305" key="3"/>
<name>RL28A_MYCTO</name>
<dbReference type="EMBL" id="AE000516">
    <property type="protein sequence ID" value="AAK44336.1"/>
    <property type="molecule type" value="Genomic_DNA"/>
</dbReference>
<dbReference type="PIR" id="A70752">
    <property type="entry name" value="A70752"/>
</dbReference>
<dbReference type="RefSeq" id="WP_003400802.1">
    <property type="nucleotide sequence ID" value="NZ_KK341227.1"/>
</dbReference>
<dbReference type="SMR" id="P9WHB0"/>
<dbReference type="KEGG" id="mtc:MT0114"/>
<dbReference type="PATRIC" id="fig|83331.31.peg.119"/>
<dbReference type="HOGENOM" id="CLU_2383113_0_0_11"/>
<dbReference type="Proteomes" id="UP000001020">
    <property type="component" value="Chromosome"/>
</dbReference>
<dbReference type="GO" id="GO:1990904">
    <property type="term" value="C:ribonucleoprotein complex"/>
    <property type="evidence" value="ECO:0007669"/>
    <property type="project" value="UniProtKB-KW"/>
</dbReference>
<dbReference type="GO" id="GO:0005840">
    <property type="term" value="C:ribosome"/>
    <property type="evidence" value="ECO:0007669"/>
    <property type="project" value="UniProtKB-KW"/>
</dbReference>
<dbReference type="GO" id="GO:0003735">
    <property type="term" value="F:structural constituent of ribosome"/>
    <property type="evidence" value="ECO:0007669"/>
    <property type="project" value="InterPro"/>
</dbReference>
<dbReference type="GO" id="GO:0006412">
    <property type="term" value="P:translation"/>
    <property type="evidence" value="ECO:0007669"/>
    <property type="project" value="UniProtKB-UniRule"/>
</dbReference>
<dbReference type="Gene3D" id="2.30.170.40">
    <property type="entry name" value="Ribosomal protein L28/L24"/>
    <property type="match status" value="1"/>
</dbReference>
<dbReference type="HAMAP" id="MF_00373">
    <property type="entry name" value="Ribosomal_bL28"/>
    <property type="match status" value="1"/>
</dbReference>
<dbReference type="InterPro" id="IPR026569">
    <property type="entry name" value="Ribosomal_bL28"/>
</dbReference>
<dbReference type="InterPro" id="IPR034704">
    <property type="entry name" value="Ribosomal_bL28/bL31-like_sf"/>
</dbReference>
<dbReference type="InterPro" id="IPR001383">
    <property type="entry name" value="Ribosomal_bL28_bact-type"/>
</dbReference>
<dbReference type="InterPro" id="IPR037147">
    <property type="entry name" value="Ribosomal_bL28_sf"/>
</dbReference>
<dbReference type="NCBIfam" id="TIGR00009">
    <property type="entry name" value="L28"/>
    <property type="match status" value="1"/>
</dbReference>
<dbReference type="PANTHER" id="PTHR13528">
    <property type="entry name" value="39S RIBOSOMAL PROTEIN L28, MITOCHONDRIAL"/>
    <property type="match status" value="1"/>
</dbReference>
<dbReference type="PANTHER" id="PTHR13528:SF2">
    <property type="entry name" value="LARGE RIBOSOMAL SUBUNIT PROTEIN BL28M"/>
    <property type="match status" value="1"/>
</dbReference>
<dbReference type="Pfam" id="PF00830">
    <property type="entry name" value="Ribosomal_L28"/>
    <property type="match status" value="1"/>
</dbReference>
<dbReference type="SUPFAM" id="SSF143800">
    <property type="entry name" value="L28p-like"/>
    <property type="match status" value="1"/>
</dbReference>
<reference key="1">
    <citation type="journal article" date="2002" name="J. Bacteriol.">
        <title>Whole-genome comparison of Mycobacterium tuberculosis clinical and laboratory strains.</title>
        <authorList>
            <person name="Fleischmann R.D."/>
            <person name="Alland D."/>
            <person name="Eisen J.A."/>
            <person name="Carpenter L."/>
            <person name="White O."/>
            <person name="Peterson J.D."/>
            <person name="DeBoy R.T."/>
            <person name="Dodson R.J."/>
            <person name="Gwinn M.L."/>
            <person name="Haft D.H."/>
            <person name="Hickey E.K."/>
            <person name="Kolonay J.F."/>
            <person name="Nelson W.C."/>
            <person name="Umayam L.A."/>
            <person name="Ermolaeva M.D."/>
            <person name="Salzberg S.L."/>
            <person name="Delcher A."/>
            <person name="Utterback T.R."/>
            <person name="Weidman J.F."/>
            <person name="Khouri H.M."/>
            <person name="Gill J."/>
            <person name="Mikula A."/>
            <person name="Bishai W."/>
            <person name="Jacobs W.R. Jr."/>
            <person name="Venter J.C."/>
            <person name="Fraser C.M."/>
        </authorList>
    </citation>
    <scope>NUCLEOTIDE SEQUENCE [LARGE SCALE GENOMIC DNA]</scope>
    <source>
        <strain>CDC 1551 / Oshkosh</strain>
    </source>
</reference>
<proteinExistence type="inferred from homology"/>
<comment type="similarity">
    <text evidence="1">Belongs to the bacterial ribosomal protein bL28 family.</text>
</comment>
<keyword id="KW-1185">Reference proteome</keyword>
<keyword id="KW-0687">Ribonucleoprotein</keyword>
<keyword id="KW-0689">Ribosomal protein</keyword>